<evidence type="ECO:0000255" key="1">
    <source>
        <dbReference type="HAMAP-Rule" id="MF_00133"/>
    </source>
</evidence>
<evidence type="ECO:0000256" key="2">
    <source>
        <dbReference type="SAM" id="MobiDB-lite"/>
    </source>
</evidence>
<sequence>MTSTLPNASTPDPASLQPSVRPGAHGRFGRFGGQYVPETLMPALAELEQAAAQAWNDPAFTAELNQLLKNYVGRATPLYEAERLTAHYRRADGGPRIWLKREDLNHTGAHKINNALGQALLALRMGKKRIIAETGAGQHGVATATVCARFGLECVIYMGAEDMRRQALNVFRMRLLGATVQPVTAGTATLKDATSEAIRDWVTNVESTHYILGSVAGPHPYPMLVRDFHAVIGQEARQQCREAFGRLPDVLMACVGGGSNAMGLFHPFVECTNVRLIGVEAAGDGVATGRHAATITEGRAGVLHGAMSLLLQDSDGQVQEAHSISAGLDYPGVGPEHSYLREIGRAEYGAVTDQQALGALRLVSELEGIIPALETAHAFAWLEQLCPTLPDGSEVVINCSGRGDKDVNTVAEKLGDQL</sequence>
<comment type="function">
    <text evidence="1">The beta subunit is responsible for the synthesis of L-tryptophan from indole and L-serine.</text>
</comment>
<comment type="catalytic activity">
    <reaction evidence="1">
        <text>(1S,2R)-1-C-(indol-3-yl)glycerol 3-phosphate + L-serine = D-glyceraldehyde 3-phosphate + L-tryptophan + H2O</text>
        <dbReference type="Rhea" id="RHEA:10532"/>
        <dbReference type="ChEBI" id="CHEBI:15377"/>
        <dbReference type="ChEBI" id="CHEBI:33384"/>
        <dbReference type="ChEBI" id="CHEBI:57912"/>
        <dbReference type="ChEBI" id="CHEBI:58866"/>
        <dbReference type="ChEBI" id="CHEBI:59776"/>
        <dbReference type="EC" id="4.2.1.20"/>
    </reaction>
</comment>
<comment type="cofactor">
    <cofactor evidence="1">
        <name>pyridoxal 5'-phosphate</name>
        <dbReference type="ChEBI" id="CHEBI:597326"/>
    </cofactor>
</comment>
<comment type="pathway">
    <text evidence="1">Amino-acid biosynthesis; L-tryptophan biosynthesis; L-tryptophan from chorismate: step 5/5.</text>
</comment>
<comment type="subunit">
    <text evidence="1">Tetramer of two alpha and two beta chains.</text>
</comment>
<comment type="similarity">
    <text evidence="1">Belongs to the TrpB family.</text>
</comment>
<name>TRPB_PARMW</name>
<reference key="1">
    <citation type="journal article" date="2003" name="Nature">
        <title>The genome of a motile marine Synechococcus.</title>
        <authorList>
            <person name="Palenik B."/>
            <person name="Brahamsha B."/>
            <person name="Larimer F.W."/>
            <person name="Land M.L."/>
            <person name="Hauser L."/>
            <person name="Chain P."/>
            <person name="Lamerdin J.E."/>
            <person name="Regala W."/>
            <person name="Allen E.E."/>
            <person name="McCarren J."/>
            <person name="Paulsen I.T."/>
            <person name="Dufresne A."/>
            <person name="Partensky F."/>
            <person name="Webb E.A."/>
            <person name="Waterbury J."/>
        </authorList>
    </citation>
    <scope>NUCLEOTIDE SEQUENCE [LARGE SCALE GENOMIC DNA]</scope>
    <source>
        <strain>WH8102</strain>
    </source>
</reference>
<keyword id="KW-0028">Amino-acid biosynthesis</keyword>
<keyword id="KW-0057">Aromatic amino acid biosynthesis</keyword>
<keyword id="KW-0456">Lyase</keyword>
<keyword id="KW-0663">Pyridoxal phosphate</keyword>
<keyword id="KW-0822">Tryptophan biosynthesis</keyword>
<protein>
    <recommendedName>
        <fullName evidence="1">Tryptophan synthase beta chain</fullName>
        <ecNumber evidence="1">4.2.1.20</ecNumber>
    </recommendedName>
</protein>
<proteinExistence type="inferred from homology"/>
<gene>
    <name evidence="1" type="primary">trpB</name>
    <name type="ordered locus">SYNW2280</name>
</gene>
<dbReference type="EC" id="4.2.1.20" evidence="1"/>
<dbReference type="EMBL" id="BX569695">
    <property type="protein sequence ID" value="CAE08795.1"/>
    <property type="molecule type" value="Genomic_DNA"/>
</dbReference>
<dbReference type="RefSeq" id="WP_011129133.1">
    <property type="nucleotide sequence ID" value="NC_005070.1"/>
</dbReference>
<dbReference type="SMR" id="Q7TTS6"/>
<dbReference type="STRING" id="84588.SYNW2280"/>
<dbReference type="KEGG" id="syw:SYNW2280"/>
<dbReference type="eggNOG" id="COG0133">
    <property type="taxonomic scope" value="Bacteria"/>
</dbReference>
<dbReference type="HOGENOM" id="CLU_016734_3_1_3"/>
<dbReference type="UniPathway" id="UPA00035">
    <property type="reaction ID" value="UER00044"/>
</dbReference>
<dbReference type="Proteomes" id="UP000001422">
    <property type="component" value="Chromosome"/>
</dbReference>
<dbReference type="GO" id="GO:0005737">
    <property type="term" value="C:cytoplasm"/>
    <property type="evidence" value="ECO:0007669"/>
    <property type="project" value="TreeGrafter"/>
</dbReference>
<dbReference type="GO" id="GO:0004834">
    <property type="term" value="F:tryptophan synthase activity"/>
    <property type="evidence" value="ECO:0007669"/>
    <property type="project" value="UniProtKB-UniRule"/>
</dbReference>
<dbReference type="CDD" id="cd06446">
    <property type="entry name" value="Trp-synth_B"/>
    <property type="match status" value="1"/>
</dbReference>
<dbReference type="FunFam" id="3.40.50.1100:FF:000001">
    <property type="entry name" value="Tryptophan synthase beta chain"/>
    <property type="match status" value="1"/>
</dbReference>
<dbReference type="FunFam" id="3.40.50.1100:FF:000004">
    <property type="entry name" value="Tryptophan synthase beta chain"/>
    <property type="match status" value="1"/>
</dbReference>
<dbReference type="Gene3D" id="3.40.50.1100">
    <property type="match status" value="2"/>
</dbReference>
<dbReference type="HAMAP" id="MF_00133">
    <property type="entry name" value="Trp_synth_beta"/>
    <property type="match status" value="1"/>
</dbReference>
<dbReference type="InterPro" id="IPR006653">
    <property type="entry name" value="Trp_synth_b_CS"/>
</dbReference>
<dbReference type="InterPro" id="IPR006654">
    <property type="entry name" value="Trp_synth_beta"/>
</dbReference>
<dbReference type="InterPro" id="IPR023026">
    <property type="entry name" value="Trp_synth_beta/beta-like"/>
</dbReference>
<dbReference type="InterPro" id="IPR001926">
    <property type="entry name" value="TrpB-like_PALP"/>
</dbReference>
<dbReference type="InterPro" id="IPR036052">
    <property type="entry name" value="TrpB-like_PALP_sf"/>
</dbReference>
<dbReference type="NCBIfam" id="TIGR00263">
    <property type="entry name" value="trpB"/>
    <property type="match status" value="1"/>
</dbReference>
<dbReference type="PANTHER" id="PTHR48077:SF3">
    <property type="entry name" value="TRYPTOPHAN SYNTHASE"/>
    <property type="match status" value="1"/>
</dbReference>
<dbReference type="PANTHER" id="PTHR48077">
    <property type="entry name" value="TRYPTOPHAN SYNTHASE-RELATED"/>
    <property type="match status" value="1"/>
</dbReference>
<dbReference type="Pfam" id="PF00291">
    <property type="entry name" value="PALP"/>
    <property type="match status" value="1"/>
</dbReference>
<dbReference type="PIRSF" id="PIRSF001413">
    <property type="entry name" value="Trp_syn_beta"/>
    <property type="match status" value="1"/>
</dbReference>
<dbReference type="SUPFAM" id="SSF53686">
    <property type="entry name" value="Tryptophan synthase beta subunit-like PLP-dependent enzymes"/>
    <property type="match status" value="1"/>
</dbReference>
<dbReference type="PROSITE" id="PS00168">
    <property type="entry name" value="TRP_SYNTHASE_BETA"/>
    <property type="match status" value="1"/>
</dbReference>
<organism>
    <name type="scientific">Parasynechococcus marenigrum (strain WH8102)</name>
    <dbReference type="NCBI Taxonomy" id="84588"/>
    <lineage>
        <taxon>Bacteria</taxon>
        <taxon>Bacillati</taxon>
        <taxon>Cyanobacteriota</taxon>
        <taxon>Cyanophyceae</taxon>
        <taxon>Synechococcales</taxon>
        <taxon>Prochlorococcaceae</taxon>
        <taxon>Parasynechococcus</taxon>
        <taxon>Parasynechococcus marenigrum</taxon>
    </lineage>
</organism>
<feature type="chain" id="PRO_0000099011" description="Tryptophan synthase beta chain">
    <location>
        <begin position="1"/>
        <end position="418"/>
    </location>
</feature>
<feature type="region of interest" description="Disordered" evidence="2">
    <location>
        <begin position="1"/>
        <end position="23"/>
    </location>
</feature>
<feature type="compositionally biased region" description="Polar residues" evidence="2">
    <location>
        <begin position="1"/>
        <end position="18"/>
    </location>
</feature>
<feature type="modified residue" description="N6-(pyridoxal phosphate)lysine" evidence="1">
    <location>
        <position position="111"/>
    </location>
</feature>
<accession>Q7TTS6</accession>